<accession>B7LSI6</accession>
<evidence type="ECO:0000255" key="1">
    <source>
        <dbReference type="HAMAP-Rule" id="MF_00083"/>
    </source>
</evidence>
<name>PTH_ESCF3</name>
<feature type="chain" id="PRO_1000192971" description="Peptidyl-tRNA hydrolase">
    <location>
        <begin position="1"/>
        <end position="194"/>
    </location>
</feature>
<feature type="active site" description="Proton acceptor" evidence="1">
    <location>
        <position position="21"/>
    </location>
</feature>
<feature type="binding site" evidence="1">
    <location>
        <position position="16"/>
    </location>
    <ligand>
        <name>tRNA</name>
        <dbReference type="ChEBI" id="CHEBI:17843"/>
    </ligand>
</feature>
<feature type="binding site" evidence="1">
    <location>
        <position position="67"/>
    </location>
    <ligand>
        <name>tRNA</name>
        <dbReference type="ChEBI" id="CHEBI:17843"/>
    </ligand>
</feature>
<feature type="binding site" evidence="1">
    <location>
        <position position="69"/>
    </location>
    <ligand>
        <name>tRNA</name>
        <dbReference type="ChEBI" id="CHEBI:17843"/>
    </ligand>
</feature>
<feature type="binding site" evidence="1">
    <location>
        <position position="115"/>
    </location>
    <ligand>
        <name>tRNA</name>
        <dbReference type="ChEBI" id="CHEBI:17843"/>
    </ligand>
</feature>
<feature type="site" description="Discriminates between blocked and unblocked aminoacyl-tRNA" evidence="1">
    <location>
        <position position="11"/>
    </location>
</feature>
<feature type="site" description="Stabilizes the basic form of H active site to accept a proton" evidence="1">
    <location>
        <position position="94"/>
    </location>
</feature>
<sequence>MTIKLIVGLANPGAEYAATRHNAGAWYVDFLAERLRAPLREEPKFFGYTSRINLEGEDVRLLVPTTFMNLSGKAVAAMASFYRINPDEILVAHDELDLPPGVAKFKLGGGHGGHNGLKDIISKLGNNPNFHRLRIGIGHPGDKNKVVGFVLGKPPVTEQKLIDEAIDEAARCTEVWFKEGLAKATSRLHTFKAQ</sequence>
<proteinExistence type="inferred from homology"/>
<organism>
    <name type="scientific">Escherichia fergusonii (strain ATCC 35469 / DSM 13698 / CCUG 18766 / IAM 14443 / JCM 21226 / LMG 7866 / NBRC 102419 / NCTC 12128 / CDC 0568-73)</name>
    <dbReference type="NCBI Taxonomy" id="585054"/>
    <lineage>
        <taxon>Bacteria</taxon>
        <taxon>Pseudomonadati</taxon>
        <taxon>Pseudomonadota</taxon>
        <taxon>Gammaproteobacteria</taxon>
        <taxon>Enterobacterales</taxon>
        <taxon>Enterobacteriaceae</taxon>
        <taxon>Escherichia</taxon>
    </lineage>
</organism>
<gene>
    <name evidence="1" type="primary">pth</name>
    <name type="ordered locus">EFER_1757</name>
</gene>
<keyword id="KW-0963">Cytoplasm</keyword>
<keyword id="KW-0378">Hydrolase</keyword>
<keyword id="KW-0694">RNA-binding</keyword>
<keyword id="KW-0820">tRNA-binding</keyword>
<comment type="function">
    <text evidence="1">Hydrolyzes ribosome-free peptidyl-tRNAs (with 1 or more amino acids incorporated), which drop off the ribosome during protein synthesis, or as a result of ribosome stalling.</text>
</comment>
<comment type="function">
    <text evidence="1">Catalyzes the release of premature peptidyl moieties from peptidyl-tRNA molecules trapped in stalled 50S ribosomal subunits, and thus maintains levels of free tRNAs and 50S ribosomes.</text>
</comment>
<comment type="catalytic activity">
    <reaction evidence="1">
        <text>an N-acyl-L-alpha-aminoacyl-tRNA + H2O = an N-acyl-L-amino acid + a tRNA + H(+)</text>
        <dbReference type="Rhea" id="RHEA:54448"/>
        <dbReference type="Rhea" id="RHEA-COMP:10123"/>
        <dbReference type="Rhea" id="RHEA-COMP:13883"/>
        <dbReference type="ChEBI" id="CHEBI:15377"/>
        <dbReference type="ChEBI" id="CHEBI:15378"/>
        <dbReference type="ChEBI" id="CHEBI:59874"/>
        <dbReference type="ChEBI" id="CHEBI:78442"/>
        <dbReference type="ChEBI" id="CHEBI:138191"/>
        <dbReference type="EC" id="3.1.1.29"/>
    </reaction>
</comment>
<comment type="subunit">
    <text evidence="1">Monomer.</text>
</comment>
<comment type="subcellular location">
    <subcellularLocation>
        <location evidence="1">Cytoplasm</location>
    </subcellularLocation>
</comment>
<comment type="similarity">
    <text evidence="1">Belongs to the PTH family.</text>
</comment>
<protein>
    <recommendedName>
        <fullName evidence="1">Peptidyl-tRNA hydrolase</fullName>
        <shortName evidence="1">Pth</shortName>
        <ecNumber evidence="1">3.1.1.29</ecNumber>
    </recommendedName>
</protein>
<dbReference type="EC" id="3.1.1.29" evidence="1"/>
<dbReference type="EMBL" id="CU928158">
    <property type="protein sequence ID" value="CAQ89272.1"/>
    <property type="molecule type" value="Genomic_DNA"/>
</dbReference>
<dbReference type="RefSeq" id="WP_000152953.1">
    <property type="nucleotide sequence ID" value="NC_011740.1"/>
</dbReference>
<dbReference type="SMR" id="B7LSI6"/>
<dbReference type="GeneID" id="75057206"/>
<dbReference type="KEGG" id="efe:EFER_1757"/>
<dbReference type="HOGENOM" id="CLU_062456_3_1_6"/>
<dbReference type="OrthoDB" id="9800507at2"/>
<dbReference type="Proteomes" id="UP000000745">
    <property type="component" value="Chromosome"/>
</dbReference>
<dbReference type="GO" id="GO:0005737">
    <property type="term" value="C:cytoplasm"/>
    <property type="evidence" value="ECO:0007669"/>
    <property type="project" value="UniProtKB-SubCell"/>
</dbReference>
<dbReference type="GO" id="GO:0004045">
    <property type="term" value="F:peptidyl-tRNA hydrolase activity"/>
    <property type="evidence" value="ECO:0007669"/>
    <property type="project" value="UniProtKB-UniRule"/>
</dbReference>
<dbReference type="GO" id="GO:0000049">
    <property type="term" value="F:tRNA binding"/>
    <property type="evidence" value="ECO:0007669"/>
    <property type="project" value="UniProtKB-UniRule"/>
</dbReference>
<dbReference type="GO" id="GO:0006515">
    <property type="term" value="P:protein quality control for misfolded or incompletely synthesized proteins"/>
    <property type="evidence" value="ECO:0007669"/>
    <property type="project" value="UniProtKB-UniRule"/>
</dbReference>
<dbReference type="GO" id="GO:0072344">
    <property type="term" value="P:rescue of stalled ribosome"/>
    <property type="evidence" value="ECO:0007669"/>
    <property type="project" value="UniProtKB-UniRule"/>
</dbReference>
<dbReference type="CDD" id="cd00462">
    <property type="entry name" value="PTH"/>
    <property type="match status" value="1"/>
</dbReference>
<dbReference type="FunFam" id="3.40.50.1470:FF:000001">
    <property type="entry name" value="Peptidyl-tRNA hydrolase"/>
    <property type="match status" value="1"/>
</dbReference>
<dbReference type="Gene3D" id="3.40.50.1470">
    <property type="entry name" value="Peptidyl-tRNA hydrolase"/>
    <property type="match status" value="1"/>
</dbReference>
<dbReference type="HAMAP" id="MF_00083">
    <property type="entry name" value="Pept_tRNA_hydro_bact"/>
    <property type="match status" value="1"/>
</dbReference>
<dbReference type="InterPro" id="IPR001328">
    <property type="entry name" value="Pept_tRNA_hydro"/>
</dbReference>
<dbReference type="InterPro" id="IPR018171">
    <property type="entry name" value="Pept_tRNA_hydro_CS"/>
</dbReference>
<dbReference type="InterPro" id="IPR036416">
    <property type="entry name" value="Pept_tRNA_hydro_sf"/>
</dbReference>
<dbReference type="NCBIfam" id="TIGR00447">
    <property type="entry name" value="pth"/>
    <property type="match status" value="1"/>
</dbReference>
<dbReference type="PANTHER" id="PTHR17224">
    <property type="entry name" value="PEPTIDYL-TRNA HYDROLASE"/>
    <property type="match status" value="1"/>
</dbReference>
<dbReference type="PANTHER" id="PTHR17224:SF1">
    <property type="entry name" value="PEPTIDYL-TRNA HYDROLASE"/>
    <property type="match status" value="1"/>
</dbReference>
<dbReference type="Pfam" id="PF01195">
    <property type="entry name" value="Pept_tRNA_hydro"/>
    <property type="match status" value="1"/>
</dbReference>
<dbReference type="SUPFAM" id="SSF53178">
    <property type="entry name" value="Peptidyl-tRNA hydrolase-like"/>
    <property type="match status" value="1"/>
</dbReference>
<dbReference type="PROSITE" id="PS01195">
    <property type="entry name" value="PEPT_TRNA_HYDROL_1"/>
    <property type="match status" value="1"/>
</dbReference>
<dbReference type="PROSITE" id="PS01196">
    <property type="entry name" value="PEPT_TRNA_HYDROL_2"/>
    <property type="match status" value="1"/>
</dbReference>
<reference key="1">
    <citation type="journal article" date="2009" name="PLoS Genet.">
        <title>Organised genome dynamics in the Escherichia coli species results in highly diverse adaptive paths.</title>
        <authorList>
            <person name="Touchon M."/>
            <person name="Hoede C."/>
            <person name="Tenaillon O."/>
            <person name="Barbe V."/>
            <person name="Baeriswyl S."/>
            <person name="Bidet P."/>
            <person name="Bingen E."/>
            <person name="Bonacorsi S."/>
            <person name="Bouchier C."/>
            <person name="Bouvet O."/>
            <person name="Calteau A."/>
            <person name="Chiapello H."/>
            <person name="Clermont O."/>
            <person name="Cruveiller S."/>
            <person name="Danchin A."/>
            <person name="Diard M."/>
            <person name="Dossat C."/>
            <person name="Karoui M.E."/>
            <person name="Frapy E."/>
            <person name="Garry L."/>
            <person name="Ghigo J.M."/>
            <person name="Gilles A.M."/>
            <person name="Johnson J."/>
            <person name="Le Bouguenec C."/>
            <person name="Lescat M."/>
            <person name="Mangenot S."/>
            <person name="Martinez-Jehanne V."/>
            <person name="Matic I."/>
            <person name="Nassif X."/>
            <person name="Oztas S."/>
            <person name="Petit M.A."/>
            <person name="Pichon C."/>
            <person name="Rouy Z."/>
            <person name="Ruf C.S."/>
            <person name="Schneider D."/>
            <person name="Tourret J."/>
            <person name="Vacherie B."/>
            <person name="Vallenet D."/>
            <person name="Medigue C."/>
            <person name="Rocha E.P.C."/>
            <person name="Denamur E."/>
        </authorList>
    </citation>
    <scope>NUCLEOTIDE SEQUENCE [LARGE SCALE GENOMIC DNA]</scope>
    <source>
        <strain>ATCC 35469 / DSM 13698 / BCRC 15582 / CCUG 18766 / IAM 14443 / JCM 21226 / LMG 7866 / NBRC 102419 / NCTC 12128 / CDC 0568-73</strain>
    </source>
</reference>